<dbReference type="EMBL" id="AF243438">
    <property type="protein sequence ID" value="AAG14203.1"/>
    <property type="molecule type" value="Genomic_DNA"/>
</dbReference>
<dbReference type="RefSeq" id="YP_001033939.1">
    <property type="nucleotide sequence ID" value="NC_002229.3"/>
</dbReference>
<dbReference type="GeneID" id="4811484"/>
<dbReference type="KEGG" id="vg:4811484"/>
<dbReference type="Proteomes" id="UP000008072">
    <property type="component" value="Segment"/>
</dbReference>
<dbReference type="GO" id="GO:0044178">
    <property type="term" value="C:host cell Golgi membrane"/>
    <property type="evidence" value="ECO:0007669"/>
    <property type="project" value="UniProtKB-SubCell"/>
</dbReference>
<dbReference type="GO" id="GO:0020002">
    <property type="term" value="C:host cell plasma membrane"/>
    <property type="evidence" value="ECO:0007669"/>
    <property type="project" value="UniProtKB-SubCell"/>
</dbReference>
<dbReference type="GO" id="GO:0016020">
    <property type="term" value="C:membrane"/>
    <property type="evidence" value="ECO:0007669"/>
    <property type="project" value="UniProtKB-KW"/>
</dbReference>
<dbReference type="GO" id="GO:0019033">
    <property type="term" value="C:viral tegument"/>
    <property type="evidence" value="ECO:0007669"/>
    <property type="project" value="UniProtKB-SubCell"/>
</dbReference>
<dbReference type="GO" id="GO:0055036">
    <property type="term" value="C:virion membrane"/>
    <property type="evidence" value="ECO:0007669"/>
    <property type="project" value="UniProtKB-SubCell"/>
</dbReference>
<dbReference type="GO" id="GO:0009653">
    <property type="term" value="P:anatomical structure morphogenesis"/>
    <property type="evidence" value="ECO:0007669"/>
    <property type="project" value="UniProtKB-UniRule"/>
</dbReference>
<dbReference type="GO" id="GO:0046760">
    <property type="term" value="P:viral budding from Golgi membrane"/>
    <property type="evidence" value="ECO:0007669"/>
    <property type="project" value="UniProtKB-UniRule"/>
</dbReference>
<dbReference type="HAMAP" id="MF_04040">
    <property type="entry name" value="HSV_CEP3_alphahv"/>
    <property type="match status" value="1"/>
</dbReference>
<dbReference type="InterPro" id="IPR024351">
    <property type="entry name" value="Tegument_UL11_Herpesvir"/>
</dbReference>
<dbReference type="Pfam" id="PF11094">
    <property type="entry name" value="UL11"/>
    <property type="match status" value="1"/>
</dbReference>
<feature type="initiator methionine" description="Removed; by host" evidence="1 2">
    <location>
        <position position="1"/>
    </location>
</feature>
<feature type="chain" id="PRO_0000406544" description="Cytoplasmic envelopment protein 3" evidence="2">
    <location>
        <begin position="2"/>
        <end position="84"/>
    </location>
</feature>
<feature type="region of interest" description="Asp/Glu-rich (acidic)" evidence="2">
    <location>
        <begin position="40"/>
        <end position="46"/>
    </location>
</feature>
<feature type="lipid moiety-binding region" description="N-myristoyl glycine; by host" evidence="2">
    <location>
        <position position="2"/>
    </location>
</feature>
<protein>
    <recommendedName>
        <fullName evidence="2">Cytoplasmic envelopment protein 3</fullName>
    </recommendedName>
</protein>
<accession>Q77MS5</accession>
<reference key="1">
    <citation type="journal article" date="2000" name="J. Virol.">
        <title>The genome of a very virulent Marek's disease virus.</title>
        <authorList>
            <person name="Tulman E.R."/>
            <person name="Afonso C.L."/>
            <person name="Lu Z."/>
            <person name="Zsak L."/>
            <person name="Rock D.L."/>
            <person name="Kutish G.F."/>
        </authorList>
    </citation>
    <scope>NUCLEOTIDE SEQUENCE [LARGE SCALE GENOMIC DNA]</scope>
</reference>
<proteinExistence type="inferred from homology"/>
<keyword id="KW-1032">Host cell membrane</keyword>
<keyword id="KW-1040">Host Golgi apparatus</keyword>
<keyword id="KW-1043">Host membrane</keyword>
<keyword id="KW-0449">Lipoprotein</keyword>
<keyword id="KW-0472">Membrane</keyword>
<keyword id="KW-0519">Myristate</keyword>
<keyword id="KW-0564">Palmitate</keyword>
<keyword id="KW-0597">Phosphoprotein</keyword>
<keyword id="KW-1185">Reference proteome</keyword>
<keyword id="KW-0946">Virion</keyword>
<keyword id="KW-0920">Virion tegument</keyword>
<sequence>MGQAVSYLTYTLRRCCKKNTLTTESGEVIELDDEHYDTVDLDDLRCSDPLMQPKFVLLKNGRRGKRNREYDNDHEKYVMMFNKE</sequence>
<organismHost>
    <name type="scientific">Gallus gallus</name>
    <name type="common">Chicken</name>
    <dbReference type="NCBI Taxonomy" id="9031"/>
</organismHost>
<organism>
    <name type="scientific">Gallid herpesvirus 2 (strain Chicken/Md5/ATCC VR-987)</name>
    <name type="common">GaHV-2</name>
    <name type="synonym">Marek's disease herpesvirus type 1</name>
    <dbReference type="NCBI Taxonomy" id="10389"/>
    <lineage>
        <taxon>Viruses</taxon>
        <taxon>Duplodnaviria</taxon>
        <taxon>Heunggongvirae</taxon>
        <taxon>Peploviricota</taxon>
        <taxon>Herviviricetes</taxon>
        <taxon>Herpesvirales</taxon>
        <taxon>Orthoherpesviridae</taxon>
        <taxon>Alphaherpesvirinae</taxon>
        <taxon>Mardivirus</taxon>
        <taxon>Mardivirus gallidalpha2</taxon>
        <taxon>Gallid alphaherpesvirus 2</taxon>
    </lineage>
</organism>
<name>CEP3_GAHVM</name>
<evidence type="ECO:0000250" key="1">
    <source>
        <dbReference type="UniProtKB" id="P04289"/>
    </source>
</evidence>
<evidence type="ECO:0000255" key="2">
    <source>
        <dbReference type="HAMAP-Rule" id="MF_04040"/>
    </source>
</evidence>
<comment type="function">
    <text evidence="2">Plays an important role in the cytoplasmic envelopment of tegument proteins and capsids during the assembly and egress processes. Also participates in viral entry at the fusion step probably by regulating the core fusion machinery.</text>
</comment>
<comment type="subunit">
    <text evidence="2">Interacts with cytoplasmic envelopment protein 2; this interaction is essential for the proper localization of each protein to the assembly complex and thus for the production of infectious virus.</text>
</comment>
<comment type="subcellular location">
    <subcellularLocation>
        <location evidence="2">Virion tegument</location>
    </subcellularLocation>
    <subcellularLocation>
        <location evidence="2">Virion membrane</location>
        <topology evidence="2">Lipid-anchor</topology>
    </subcellularLocation>
    <subcellularLocation>
        <location evidence="2">Host cell membrane</location>
        <topology evidence="2">Lipid-anchor</topology>
        <orientation evidence="2">Cytoplasmic side</orientation>
    </subcellularLocation>
    <subcellularLocation>
        <location evidence="2">Host Golgi apparatus membrane</location>
        <topology evidence="2">Lipid-anchor</topology>
        <orientation evidence="2">Cytoplasmic side</orientation>
    </subcellularLocation>
    <text evidence="2">Virion membrane-associated tegument protein. Associates with host membrane lipids rafts. During virion morphogenesis, this protein probably accumulates in the endosomes and trans-Golgi where secondary envelopment occurs. It is probably transported to the cell surface from where it is endocytosed and directed to the trans-Golgi network (TGN).</text>
</comment>
<comment type="PTM">
    <text evidence="2">Myristoylation and palmitoylation (probably on one or more of the nearby cysteines at the N-terminus) enable membrane-binding and Golgi apparatus-specific targeting and are essential for efficient packaging.</text>
</comment>
<comment type="PTM">
    <text evidence="2">Phosphorylated. Phosphorylation does not seem to be required for recycling to the host Golgi apparatus. Packaging is selective for underphosphorylated forms.</text>
</comment>
<comment type="similarity">
    <text evidence="2">Belongs to the herpesviridae cytoplasmic envelopment protein 3 family.</text>
</comment>
<gene>
    <name type="primary">MDV023</name>
</gene>